<evidence type="ECO:0000255" key="1">
    <source>
        <dbReference type="HAMAP-Rule" id="MF_00210"/>
    </source>
</evidence>
<dbReference type="EC" id="2.5.1.19" evidence="1"/>
<dbReference type="EMBL" id="CP000806">
    <property type="protein sequence ID" value="ACB51131.1"/>
    <property type="molecule type" value="Genomic_DNA"/>
</dbReference>
<dbReference type="RefSeq" id="WP_009545595.1">
    <property type="nucleotide sequence ID" value="NC_010546.1"/>
</dbReference>
<dbReference type="SMR" id="B1WZH9"/>
<dbReference type="STRING" id="43989.cce_1781"/>
<dbReference type="KEGG" id="cyt:cce_1781"/>
<dbReference type="eggNOG" id="COG0128">
    <property type="taxonomic scope" value="Bacteria"/>
</dbReference>
<dbReference type="HOGENOM" id="CLU_024321_0_1_3"/>
<dbReference type="OrthoDB" id="9809920at2"/>
<dbReference type="UniPathway" id="UPA00053">
    <property type="reaction ID" value="UER00089"/>
</dbReference>
<dbReference type="Proteomes" id="UP000001203">
    <property type="component" value="Chromosome circular"/>
</dbReference>
<dbReference type="GO" id="GO:0005737">
    <property type="term" value="C:cytoplasm"/>
    <property type="evidence" value="ECO:0007669"/>
    <property type="project" value="UniProtKB-SubCell"/>
</dbReference>
<dbReference type="GO" id="GO:0003866">
    <property type="term" value="F:3-phosphoshikimate 1-carboxyvinyltransferase activity"/>
    <property type="evidence" value="ECO:0007669"/>
    <property type="project" value="UniProtKB-UniRule"/>
</dbReference>
<dbReference type="GO" id="GO:0008652">
    <property type="term" value="P:amino acid biosynthetic process"/>
    <property type="evidence" value="ECO:0007669"/>
    <property type="project" value="UniProtKB-KW"/>
</dbReference>
<dbReference type="GO" id="GO:0009073">
    <property type="term" value="P:aromatic amino acid family biosynthetic process"/>
    <property type="evidence" value="ECO:0007669"/>
    <property type="project" value="UniProtKB-KW"/>
</dbReference>
<dbReference type="GO" id="GO:0009423">
    <property type="term" value="P:chorismate biosynthetic process"/>
    <property type="evidence" value="ECO:0007669"/>
    <property type="project" value="UniProtKB-UniRule"/>
</dbReference>
<dbReference type="CDD" id="cd01556">
    <property type="entry name" value="EPSP_synthase"/>
    <property type="match status" value="1"/>
</dbReference>
<dbReference type="FunFam" id="3.65.10.10:FF:000005">
    <property type="entry name" value="3-phosphoshikimate 1-carboxyvinyltransferase"/>
    <property type="match status" value="1"/>
</dbReference>
<dbReference type="FunFam" id="3.65.10.10:FF:000006">
    <property type="entry name" value="3-phosphoshikimate 1-carboxyvinyltransferase"/>
    <property type="match status" value="1"/>
</dbReference>
<dbReference type="Gene3D" id="3.65.10.10">
    <property type="entry name" value="Enolpyruvate transferase domain"/>
    <property type="match status" value="2"/>
</dbReference>
<dbReference type="HAMAP" id="MF_00210">
    <property type="entry name" value="EPSP_synth"/>
    <property type="match status" value="1"/>
</dbReference>
<dbReference type="InterPro" id="IPR001986">
    <property type="entry name" value="Enolpyruvate_Tfrase_dom"/>
</dbReference>
<dbReference type="InterPro" id="IPR036968">
    <property type="entry name" value="Enolpyruvate_Tfrase_sf"/>
</dbReference>
<dbReference type="InterPro" id="IPR006264">
    <property type="entry name" value="EPSP_synthase"/>
</dbReference>
<dbReference type="InterPro" id="IPR023193">
    <property type="entry name" value="EPSP_synthase_CS"/>
</dbReference>
<dbReference type="InterPro" id="IPR013792">
    <property type="entry name" value="RNA3'P_cycl/enolpyr_Trfase_a/b"/>
</dbReference>
<dbReference type="NCBIfam" id="TIGR01356">
    <property type="entry name" value="aroA"/>
    <property type="match status" value="1"/>
</dbReference>
<dbReference type="PANTHER" id="PTHR21090">
    <property type="entry name" value="AROM/DEHYDROQUINATE SYNTHASE"/>
    <property type="match status" value="1"/>
</dbReference>
<dbReference type="PANTHER" id="PTHR21090:SF5">
    <property type="entry name" value="PENTAFUNCTIONAL AROM POLYPEPTIDE"/>
    <property type="match status" value="1"/>
</dbReference>
<dbReference type="Pfam" id="PF00275">
    <property type="entry name" value="EPSP_synthase"/>
    <property type="match status" value="1"/>
</dbReference>
<dbReference type="PIRSF" id="PIRSF000505">
    <property type="entry name" value="EPSPS"/>
    <property type="match status" value="1"/>
</dbReference>
<dbReference type="SUPFAM" id="SSF55205">
    <property type="entry name" value="EPT/RTPC-like"/>
    <property type="match status" value="1"/>
</dbReference>
<dbReference type="PROSITE" id="PS00104">
    <property type="entry name" value="EPSP_SYNTHASE_1"/>
    <property type="match status" value="1"/>
</dbReference>
<dbReference type="PROSITE" id="PS00885">
    <property type="entry name" value="EPSP_SYNTHASE_2"/>
    <property type="match status" value="1"/>
</dbReference>
<feature type="chain" id="PRO_1000099697" description="3-phosphoshikimate 1-carboxyvinyltransferase">
    <location>
        <begin position="1"/>
        <end position="451"/>
    </location>
</feature>
<feature type="active site" description="Proton acceptor" evidence="1">
    <location>
        <position position="335"/>
    </location>
</feature>
<feature type="binding site" evidence="1">
    <location>
        <position position="38"/>
    </location>
    <ligand>
        <name>3-phosphoshikimate</name>
        <dbReference type="ChEBI" id="CHEBI:145989"/>
    </ligand>
</feature>
<feature type="binding site" evidence="1">
    <location>
        <position position="38"/>
    </location>
    <ligand>
        <name>phosphoenolpyruvate</name>
        <dbReference type="ChEBI" id="CHEBI:58702"/>
    </ligand>
</feature>
<feature type="binding site" evidence="1">
    <location>
        <position position="39"/>
    </location>
    <ligand>
        <name>3-phosphoshikimate</name>
        <dbReference type="ChEBI" id="CHEBI:145989"/>
    </ligand>
</feature>
<feature type="binding site" evidence="1">
    <location>
        <position position="43"/>
    </location>
    <ligand>
        <name>3-phosphoshikimate</name>
        <dbReference type="ChEBI" id="CHEBI:145989"/>
    </ligand>
</feature>
<feature type="binding site" evidence="1">
    <location>
        <position position="111"/>
    </location>
    <ligand>
        <name>phosphoenolpyruvate</name>
        <dbReference type="ChEBI" id="CHEBI:58702"/>
    </ligand>
</feature>
<feature type="binding site" evidence="1">
    <location>
        <position position="140"/>
    </location>
    <ligand>
        <name>phosphoenolpyruvate</name>
        <dbReference type="ChEBI" id="CHEBI:58702"/>
    </ligand>
</feature>
<feature type="binding site" evidence="1">
    <location>
        <position position="185"/>
    </location>
    <ligand>
        <name>3-phosphoshikimate</name>
        <dbReference type="ChEBI" id="CHEBI:145989"/>
    </ligand>
</feature>
<feature type="binding site" evidence="1">
    <location>
        <position position="187"/>
    </location>
    <ligand>
        <name>3-phosphoshikimate</name>
        <dbReference type="ChEBI" id="CHEBI:145989"/>
    </ligand>
</feature>
<feature type="binding site" evidence="1">
    <location>
        <position position="187"/>
    </location>
    <ligand>
        <name>phosphoenolpyruvate</name>
        <dbReference type="ChEBI" id="CHEBI:58702"/>
    </ligand>
</feature>
<feature type="binding site" evidence="1">
    <location>
        <position position="335"/>
    </location>
    <ligand>
        <name>3-phosphoshikimate</name>
        <dbReference type="ChEBI" id="CHEBI:145989"/>
    </ligand>
</feature>
<feature type="binding site" evidence="1">
    <location>
        <position position="362"/>
    </location>
    <ligand>
        <name>3-phosphoshikimate</name>
        <dbReference type="ChEBI" id="CHEBI:145989"/>
    </ligand>
</feature>
<feature type="binding site" evidence="1">
    <location>
        <position position="366"/>
    </location>
    <ligand>
        <name>phosphoenolpyruvate</name>
        <dbReference type="ChEBI" id="CHEBI:58702"/>
    </ligand>
</feature>
<feature type="binding site" evidence="1">
    <location>
        <position position="408"/>
    </location>
    <ligand>
        <name>phosphoenolpyruvate</name>
        <dbReference type="ChEBI" id="CHEBI:58702"/>
    </ligand>
</feature>
<accession>B1WZH9</accession>
<name>AROA_CROS5</name>
<keyword id="KW-0028">Amino-acid biosynthesis</keyword>
<keyword id="KW-0057">Aromatic amino acid biosynthesis</keyword>
<keyword id="KW-0963">Cytoplasm</keyword>
<keyword id="KW-1185">Reference proteome</keyword>
<keyword id="KW-0808">Transferase</keyword>
<reference key="1">
    <citation type="journal article" date="2008" name="Proc. Natl. Acad. Sci. U.S.A.">
        <title>The genome of Cyanothece 51142, a unicellular diazotrophic cyanobacterium important in the marine nitrogen cycle.</title>
        <authorList>
            <person name="Welsh E.A."/>
            <person name="Liberton M."/>
            <person name="Stoeckel J."/>
            <person name="Loh T."/>
            <person name="Elvitigala T."/>
            <person name="Wang C."/>
            <person name="Wollam A."/>
            <person name="Fulton R.S."/>
            <person name="Clifton S.W."/>
            <person name="Jacobs J.M."/>
            <person name="Aurora R."/>
            <person name="Ghosh B.K."/>
            <person name="Sherman L.A."/>
            <person name="Smith R.D."/>
            <person name="Wilson R.K."/>
            <person name="Pakrasi H.B."/>
        </authorList>
    </citation>
    <scope>NUCLEOTIDE SEQUENCE [LARGE SCALE GENOMIC DNA]</scope>
    <source>
        <strain>ATCC 51142 / BH68</strain>
    </source>
</reference>
<gene>
    <name evidence="1" type="primary">aroA</name>
    <name type="ordered locus">cce_1781</name>
</gene>
<organism>
    <name type="scientific">Crocosphaera subtropica (strain ATCC 51142 / BH68)</name>
    <name type="common">Cyanothece sp. (strain ATCC 51142)</name>
    <dbReference type="NCBI Taxonomy" id="43989"/>
    <lineage>
        <taxon>Bacteria</taxon>
        <taxon>Bacillati</taxon>
        <taxon>Cyanobacteriota</taxon>
        <taxon>Cyanophyceae</taxon>
        <taxon>Oscillatoriophycideae</taxon>
        <taxon>Chroococcales</taxon>
        <taxon>Aphanothecaceae</taxon>
        <taxon>Crocosphaera</taxon>
        <taxon>Crocosphaera subtropica</taxon>
    </lineage>
</organism>
<proteinExistence type="inferred from homology"/>
<protein>
    <recommendedName>
        <fullName evidence="1">3-phosphoshikimate 1-carboxyvinyltransferase</fullName>
        <ecNumber evidence="1">2.5.1.19</ecNumber>
    </recommendedName>
    <alternativeName>
        <fullName evidence="1">5-enolpyruvylshikimate-3-phosphate synthase</fullName>
        <shortName evidence="1">EPSP synthase</shortName>
        <shortName evidence="1">EPSPS</shortName>
    </alternativeName>
</protein>
<comment type="function">
    <text evidence="1">Catalyzes the transfer of the enolpyruvyl moiety of phosphoenolpyruvate (PEP) to the 5-hydroxyl of shikimate-3-phosphate (S3P) to produce enolpyruvyl shikimate-3-phosphate and inorganic phosphate.</text>
</comment>
<comment type="catalytic activity">
    <reaction evidence="1">
        <text>3-phosphoshikimate + phosphoenolpyruvate = 5-O-(1-carboxyvinyl)-3-phosphoshikimate + phosphate</text>
        <dbReference type="Rhea" id="RHEA:21256"/>
        <dbReference type="ChEBI" id="CHEBI:43474"/>
        <dbReference type="ChEBI" id="CHEBI:57701"/>
        <dbReference type="ChEBI" id="CHEBI:58702"/>
        <dbReference type="ChEBI" id="CHEBI:145989"/>
        <dbReference type="EC" id="2.5.1.19"/>
    </reaction>
    <physiologicalReaction direction="left-to-right" evidence="1">
        <dbReference type="Rhea" id="RHEA:21257"/>
    </physiologicalReaction>
</comment>
<comment type="pathway">
    <text evidence="1">Metabolic intermediate biosynthesis; chorismate biosynthesis; chorismate from D-erythrose 4-phosphate and phosphoenolpyruvate: step 6/7.</text>
</comment>
<comment type="subunit">
    <text evidence="1">Monomer.</text>
</comment>
<comment type="subcellular location">
    <subcellularLocation>
        <location evidence="1">Cytoplasm</location>
    </subcellularLocation>
</comment>
<comment type="similarity">
    <text evidence="1">Belongs to the EPSP synthase family.</text>
</comment>
<sequence>MSKSIINLQSVENQQILSITPPNTGLSLQGTLQIPGDKSISHRALMLGAIAEGETIIAGLLLGEDPRSTAECFRAMGAQISPLNSEKVTIQGIGLGKLQEPLDVLNAGNSGTTMRLMLGLLASHPDRLFCVTGDASLRSRPMSRVIQPLQDMGANIWGRKNNTLAPLAVQGKSLKPIHYHSPIASAQVKSCILLAGLMTDGKTTVTEPALSRDHSERMLQAFGATLDIDSQTNSVTINGHPKLIGQTVIVPGDISSSAFWLVAASIVPGSELLIENVGINPTRTGILEALEMMGADITLENKRILTGEPVADLRVKSCQLKGCTIGGNIIPRLIDEVPILAVAGIFATGKTIIKDAAELRVKESDRLAVMASELTKMGAKITELPDGLEITGGTPLKAAEVDSYTDHRIAMSLAIAALNAKGKTIINRAEAAAISYPKFVETLQQVCGDSN</sequence>